<organism>
    <name type="scientific">Methanococcus aeolicus (strain ATCC BAA-1280 / DSM 17508 / OCM 812 / Nankai-3)</name>
    <dbReference type="NCBI Taxonomy" id="419665"/>
    <lineage>
        <taxon>Archaea</taxon>
        <taxon>Methanobacteriati</taxon>
        <taxon>Methanobacteriota</taxon>
        <taxon>Methanomada group</taxon>
        <taxon>Methanococci</taxon>
        <taxon>Methanococcales</taxon>
        <taxon>Methanococcaceae</taxon>
        <taxon>Methanococcus</taxon>
    </lineage>
</organism>
<keyword id="KW-0687">Ribonucleoprotein</keyword>
<keyword id="KW-0689">Ribosomal protein</keyword>
<proteinExistence type="inferred from homology"/>
<sequence>MQKSEGFRSGTRYKLKKHPRAKGLYPITRALKQFENGQTVHVILDPSVQKGMPHPKFHGKTGKIIGQRGSSFIVEVKDGHATKEIIARPQHLRECKN</sequence>
<reference key="1">
    <citation type="submission" date="2007-06" db="EMBL/GenBank/DDBJ databases">
        <title>Complete sequence of Methanococcus aeolicus Nankai-3.</title>
        <authorList>
            <consortium name="US DOE Joint Genome Institute"/>
            <person name="Copeland A."/>
            <person name="Lucas S."/>
            <person name="Lapidus A."/>
            <person name="Barry K."/>
            <person name="Glavina del Rio T."/>
            <person name="Dalin E."/>
            <person name="Tice H."/>
            <person name="Pitluck S."/>
            <person name="Chain P."/>
            <person name="Malfatti S."/>
            <person name="Shin M."/>
            <person name="Vergez L."/>
            <person name="Schmutz J."/>
            <person name="Larimer F."/>
            <person name="Land M."/>
            <person name="Hauser L."/>
            <person name="Kyrpides N."/>
            <person name="Lykidis A."/>
            <person name="Sieprawska-Lupa M."/>
            <person name="Whitman W.B."/>
            <person name="Richardson P."/>
        </authorList>
    </citation>
    <scope>NUCLEOTIDE SEQUENCE [LARGE SCALE GENOMIC DNA]</scope>
    <source>
        <strain>ATCC BAA-1280 / DSM 17508 / OCM 812 / Nankai-3</strain>
    </source>
</reference>
<protein>
    <recommendedName>
        <fullName evidence="1">Large ribosomal subunit protein eL21</fullName>
    </recommendedName>
    <alternativeName>
        <fullName evidence="2">50S ribosomal protein L21e</fullName>
    </alternativeName>
</protein>
<feature type="chain" id="PRO_1000007117" description="Large ribosomal subunit protein eL21">
    <location>
        <begin position="1"/>
        <end position="97"/>
    </location>
</feature>
<gene>
    <name evidence="1" type="primary">rpl21e</name>
    <name type="ordered locus">Maeo_0057</name>
</gene>
<accession>A6UT27</accession>
<evidence type="ECO:0000255" key="1">
    <source>
        <dbReference type="HAMAP-Rule" id="MF_00369"/>
    </source>
</evidence>
<evidence type="ECO:0000305" key="2"/>
<name>RL21_META3</name>
<dbReference type="EMBL" id="CP000743">
    <property type="protein sequence ID" value="ABR55649.1"/>
    <property type="molecule type" value="Genomic_DNA"/>
</dbReference>
<dbReference type="RefSeq" id="WP_011972781.1">
    <property type="nucleotide sequence ID" value="NC_009635.1"/>
</dbReference>
<dbReference type="SMR" id="A6UT27"/>
<dbReference type="STRING" id="419665.Maeo_0057"/>
<dbReference type="GeneID" id="5326512"/>
<dbReference type="KEGG" id="mae:Maeo_0057"/>
<dbReference type="eggNOG" id="arCOG04129">
    <property type="taxonomic scope" value="Archaea"/>
</dbReference>
<dbReference type="HOGENOM" id="CLU_103610_1_1_2"/>
<dbReference type="OrthoDB" id="6295at2157"/>
<dbReference type="Proteomes" id="UP000001106">
    <property type="component" value="Chromosome"/>
</dbReference>
<dbReference type="GO" id="GO:1990904">
    <property type="term" value="C:ribonucleoprotein complex"/>
    <property type="evidence" value="ECO:0007669"/>
    <property type="project" value="UniProtKB-KW"/>
</dbReference>
<dbReference type="GO" id="GO:0005840">
    <property type="term" value="C:ribosome"/>
    <property type="evidence" value="ECO:0007669"/>
    <property type="project" value="UniProtKB-KW"/>
</dbReference>
<dbReference type="GO" id="GO:0003735">
    <property type="term" value="F:structural constituent of ribosome"/>
    <property type="evidence" value="ECO:0007669"/>
    <property type="project" value="InterPro"/>
</dbReference>
<dbReference type="GO" id="GO:0006412">
    <property type="term" value="P:translation"/>
    <property type="evidence" value="ECO:0007669"/>
    <property type="project" value="UniProtKB-UniRule"/>
</dbReference>
<dbReference type="FunFam" id="2.30.30.70:FF:000001">
    <property type="entry name" value="60S ribosomal protein L21"/>
    <property type="match status" value="1"/>
</dbReference>
<dbReference type="Gene3D" id="2.30.30.70">
    <property type="entry name" value="Ribosomal protein L21"/>
    <property type="match status" value="1"/>
</dbReference>
<dbReference type="HAMAP" id="MF_00369">
    <property type="entry name" value="Ribosomal_eL21"/>
    <property type="match status" value="1"/>
</dbReference>
<dbReference type="InterPro" id="IPR001147">
    <property type="entry name" value="Ribosomal_eL21"/>
</dbReference>
<dbReference type="InterPro" id="IPR022856">
    <property type="entry name" value="Ribosomal_eL21_arc"/>
</dbReference>
<dbReference type="InterPro" id="IPR018259">
    <property type="entry name" value="Ribosomal_eL21_CS"/>
</dbReference>
<dbReference type="InterPro" id="IPR036948">
    <property type="entry name" value="Ribosomal_eL21_sf"/>
</dbReference>
<dbReference type="InterPro" id="IPR008991">
    <property type="entry name" value="Translation_prot_SH3-like_sf"/>
</dbReference>
<dbReference type="NCBIfam" id="NF003303">
    <property type="entry name" value="PRK04306.1"/>
    <property type="match status" value="1"/>
</dbReference>
<dbReference type="PANTHER" id="PTHR20981">
    <property type="entry name" value="60S RIBOSOMAL PROTEIN L21"/>
    <property type="match status" value="1"/>
</dbReference>
<dbReference type="Pfam" id="PF01157">
    <property type="entry name" value="Ribosomal_L21e"/>
    <property type="match status" value="1"/>
</dbReference>
<dbReference type="SUPFAM" id="SSF50104">
    <property type="entry name" value="Translation proteins SH3-like domain"/>
    <property type="match status" value="1"/>
</dbReference>
<dbReference type="PROSITE" id="PS01171">
    <property type="entry name" value="RIBOSOMAL_L21E"/>
    <property type="match status" value="1"/>
</dbReference>
<comment type="similarity">
    <text evidence="1">Belongs to the eukaryotic ribosomal protein eL21 family.</text>
</comment>